<gene>
    <name evidence="1" type="primary">L4</name>
</gene>
<keyword id="KW-0167">Capsid protein</keyword>
<keyword id="KW-1048">Host nucleus</keyword>
<keyword id="KW-0426">Late protein</keyword>
<keyword id="KW-0597">Phosphoprotein</keyword>
<keyword id="KW-1185">Reference proteome</keyword>
<keyword id="KW-0946">Virion</keyword>
<protein>
    <recommendedName>
        <fullName evidence="1">Pre-hexon-linking protein VIII</fullName>
    </recommendedName>
    <alternativeName>
        <fullName evidence="1">Pre-protein VIII</fullName>
        <shortName evidence="1">pVIII</shortName>
    </alternativeName>
    <component>
        <recommendedName>
            <fullName evidence="1">Hexon-linking protein-N</fullName>
        </recommendedName>
        <alternativeName>
            <fullName evidence="1">12.1 kDa protein VIII</fullName>
        </alternativeName>
        <alternativeName>
            <fullName evidence="1">Protein VIII-N</fullName>
        </alternativeName>
    </component>
    <component>
        <recommendedName>
            <fullName evidence="1">Hexon-linking protein-C</fullName>
        </recommendedName>
        <alternativeName>
            <fullName evidence="1">7.6 kDa protein VIII</fullName>
        </alternativeName>
        <alternativeName>
            <fullName evidence="1">Protein VIII-C</fullName>
        </alternativeName>
    </component>
</protein>
<evidence type="ECO:0000255" key="1">
    <source>
        <dbReference type="HAMAP-Rule" id="MF_04049"/>
    </source>
</evidence>
<evidence type="ECO:0000305" key="2"/>
<name>CAP8_ADES1</name>
<comment type="function">
    <molecule>Hexon-linking protein-N</molecule>
    <text evidence="1">Structural component of the virion that acts as a cement protein on the capsid interior and which glue the peripentonal hexons and group-of-nine hexons together.</text>
</comment>
<comment type="function">
    <molecule>Hexon-linking protein-C</molecule>
    <text evidence="1">Structural component of the virion that acts as a cement protein on the capsid interior and which glue the peripentonal hexons and group-of-nine hexons together.</text>
</comment>
<comment type="subunit">
    <text evidence="1">Interacts with the peripentonal hexons as well as the hexons in the facets. Part of a complex composed of the core-capsid bridging protein, the endosome lysis protein VI and the hexon-linking protein VIII; these interactions bridge the virus core to the capsid.</text>
</comment>
<comment type="subcellular location">
    <molecule>Hexon-linking protein-C</molecule>
    <subcellularLocation>
        <location evidence="1">Virion</location>
    </subcellularLocation>
    <text evidence="1">Located on the inner side of the capsid shell. Present in 120 copies per virion.</text>
</comment>
<comment type="subcellular location">
    <molecule>Pre-hexon-linking protein VIII</molecule>
    <subcellularLocation>
        <location evidence="1">Host nucleus</location>
    </subcellularLocation>
</comment>
<comment type="subcellular location">
    <molecule>Hexon-linking protein-N</molecule>
    <subcellularLocation>
        <location evidence="1">Virion</location>
    </subcellularLocation>
    <text evidence="1">Located on the inner side of the capsid shell. Present in 120 copies per virion.</text>
</comment>
<comment type="induction">
    <text evidence="1">Expressed in the late phase of the viral replicative cycle.</text>
</comment>
<comment type="PTM">
    <text evidence="1">Cleaved by the viral protease during virion maturation. May cause the middle segment to be shed from the capsid.</text>
</comment>
<comment type="miscellaneous">
    <text evidence="1">All late proteins expressed from the major late promoter are produced by alternative splicing and alternative polyadenylation of the same gene giving rise to non-overlapping ORFs. A leader sequence is present in the N-terminus of all these mRNAs and is recognized by the viral shutoff protein to provide expression although conventional translation via ribosome scanning from the cap has been shut off in the host cell.</text>
</comment>
<comment type="similarity">
    <text evidence="1 2">Belongs to the adenoviridae hexon-linking protein family.</text>
</comment>
<organismHost>
    <name type="scientific">Pantherophis guttatus</name>
    <name type="common">Corn snake</name>
    <name type="synonym">Elaphe guttata</name>
    <dbReference type="NCBI Taxonomy" id="94885"/>
</organismHost>
<proteinExistence type="inferred from homology"/>
<dbReference type="EMBL" id="DQ106414">
    <property type="protein sequence ID" value="ABA47244.1"/>
    <property type="molecule type" value="Genomic_DNA"/>
</dbReference>
<dbReference type="RefSeq" id="YP_001552261.1">
    <property type="nucleotide sequence ID" value="NC_009989.1"/>
</dbReference>
<dbReference type="SMR" id="A9CB94"/>
<dbReference type="KEGG" id="vg:10973875"/>
<dbReference type="OrthoDB" id="8443at10239"/>
<dbReference type="Proteomes" id="UP000136605">
    <property type="component" value="Genome"/>
</dbReference>
<dbReference type="GO" id="GO:0042025">
    <property type="term" value="C:host cell nucleus"/>
    <property type="evidence" value="ECO:0007669"/>
    <property type="project" value="UniProtKB-SubCell"/>
</dbReference>
<dbReference type="GO" id="GO:0019028">
    <property type="term" value="C:viral capsid"/>
    <property type="evidence" value="ECO:0007669"/>
    <property type="project" value="UniProtKB-UniRule"/>
</dbReference>
<dbReference type="GO" id="GO:0031423">
    <property type="term" value="F:hexon binding"/>
    <property type="evidence" value="ECO:0007669"/>
    <property type="project" value="InterPro"/>
</dbReference>
<dbReference type="HAMAP" id="MF_04049">
    <property type="entry name" value="ADV_CAP8"/>
    <property type="match status" value="1"/>
</dbReference>
<dbReference type="InterPro" id="IPR000646">
    <property type="entry name" value="Adeno_PVIII"/>
</dbReference>
<dbReference type="Pfam" id="PF01310">
    <property type="entry name" value="Adeno_PVIII"/>
    <property type="match status" value="2"/>
</dbReference>
<reference key="1">
    <citation type="journal article" date="2002" name="J. Gen. Virol.">
        <title>Genetic analysis of an adenovirus isolated from corn snake (Elaphe guttata) implies common origin with the members of the proposed new genus Atadenovirus.</title>
        <authorList>
            <person name="Farkas S.L."/>
            <person name="Benko M."/>
            <person name="Elo P.T."/>
            <person name="Ursu K."/>
            <person name="Dan A."/>
            <person name="Ahne W."/>
            <person name="Harrach B."/>
        </authorList>
    </citation>
    <scope>NUCLEOTIDE SEQUENCE [GENOMIC DNA]</scope>
</reference>
<sequence length="278" mass="31283">MEAPVTPYIWQYQPETGTAAGARQNYGAVINWLSSDNNMYHRVQEVNRQRNKIDDFREQTVRADMAHSFNDWKPQQLSQPASTAYLPAPNPIAGPRTIPDVIFTAEGEQLAGASPSLLSGGASLPPSSYRLGDGREYRKFTRDAMPFPHNWLVKENGVWVPVEERDPLLSEEGRNALSSYPTLTYAQPPILRYRRLGQQLQGGGVVAPSSRVVSLLTEQPRMPRTEGMTPYQFSAEFPPVVYDHPFSRNLTLFPKEFSPLFDPKDQVLATSLATLQYR</sequence>
<feature type="chain" id="PRO_0000425933" description="Pre-hexon-linking protein VIII" evidence="1">
    <location>
        <begin position="1"/>
        <end position="278"/>
    </location>
</feature>
<feature type="peptide" id="PRO_0000439697" description="Hexon-linking protein-N" evidence="1">
    <location>
        <begin position="1"/>
        <end position="113"/>
    </location>
</feature>
<feature type="propeptide" id="PRO_0000439698" evidence="1">
    <location>
        <begin position="114"/>
        <end position="199"/>
    </location>
</feature>
<feature type="peptide" id="PRO_0000439699" description="Hexon-linking protein-C" evidence="1">
    <location>
        <begin position="200"/>
        <end position="278"/>
    </location>
</feature>
<feature type="site" description="Cleavage; by viral protease" evidence="1">
    <location>
        <begin position="113"/>
        <end position="114"/>
    </location>
</feature>
<feature type="site" description="Cleavage; by viral protease" evidence="1">
    <location>
        <begin position="199"/>
        <end position="200"/>
    </location>
</feature>
<accession>A9CB94</accession>
<organism>
    <name type="scientific">Snake adenovirus serotype 1</name>
    <name type="common">SnAdV-1</name>
    <dbReference type="NCBI Taxonomy" id="189830"/>
    <lineage>
        <taxon>Viruses</taxon>
        <taxon>Varidnaviria</taxon>
        <taxon>Bamfordvirae</taxon>
        <taxon>Preplasmiviricota</taxon>
        <taxon>Tectiliviricetes</taxon>
        <taxon>Rowavirales</taxon>
        <taxon>Adenoviridae</taxon>
        <taxon>Atadenovirus</taxon>
        <taxon>Snake atadenovirus A</taxon>
    </lineage>
</organism>